<name>FPG_METSB</name>
<accession>B8EKR5</accession>
<keyword id="KW-0227">DNA damage</keyword>
<keyword id="KW-0234">DNA repair</keyword>
<keyword id="KW-0238">DNA-binding</keyword>
<keyword id="KW-0326">Glycosidase</keyword>
<keyword id="KW-0378">Hydrolase</keyword>
<keyword id="KW-0456">Lyase</keyword>
<keyword id="KW-0479">Metal-binding</keyword>
<keyword id="KW-0511">Multifunctional enzyme</keyword>
<keyword id="KW-1185">Reference proteome</keyword>
<keyword id="KW-0862">Zinc</keyword>
<keyword id="KW-0863">Zinc-finger</keyword>
<protein>
    <recommendedName>
        <fullName evidence="2">Formamidopyrimidine-DNA glycosylase</fullName>
        <shortName evidence="2">Fapy-DNA glycosylase</shortName>
        <ecNumber evidence="2">3.2.2.23</ecNumber>
    </recommendedName>
    <alternativeName>
        <fullName evidence="2">DNA-(apurinic or apyrimidinic site) lyase MutM</fullName>
        <shortName evidence="2">AP lyase MutM</shortName>
        <ecNumber evidence="2">4.2.99.18</ecNumber>
    </alternativeName>
</protein>
<dbReference type="EC" id="3.2.2.23" evidence="2"/>
<dbReference type="EC" id="4.2.99.18" evidence="2"/>
<dbReference type="EMBL" id="CP001280">
    <property type="protein sequence ID" value="ACK51943.1"/>
    <property type="molecule type" value="Genomic_DNA"/>
</dbReference>
<dbReference type="RefSeq" id="WP_012592012.1">
    <property type="nucleotide sequence ID" value="NC_011666.1"/>
</dbReference>
<dbReference type="SMR" id="B8EKR5"/>
<dbReference type="STRING" id="395965.Msil_3033"/>
<dbReference type="KEGG" id="msl:Msil_3033"/>
<dbReference type="eggNOG" id="COG0266">
    <property type="taxonomic scope" value="Bacteria"/>
</dbReference>
<dbReference type="HOGENOM" id="CLU_038423_1_1_5"/>
<dbReference type="OrthoDB" id="9800855at2"/>
<dbReference type="Proteomes" id="UP000002257">
    <property type="component" value="Chromosome"/>
</dbReference>
<dbReference type="GO" id="GO:0034039">
    <property type="term" value="F:8-oxo-7,8-dihydroguanine DNA N-glycosylase activity"/>
    <property type="evidence" value="ECO:0007669"/>
    <property type="project" value="TreeGrafter"/>
</dbReference>
<dbReference type="GO" id="GO:0140078">
    <property type="term" value="F:class I DNA-(apurinic or apyrimidinic site) endonuclease activity"/>
    <property type="evidence" value="ECO:0007669"/>
    <property type="project" value="UniProtKB-EC"/>
</dbReference>
<dbReference type="GO" id="GO:0003684">
    <property type="term" value="F:damaged DNA binding"/>
    <property type="evidence" value="ECO:0007669"/>
    <property type="project" value="InterPro"/>
</dbReference>
<dbReference type="GO" id="GO:0008270">
    <property type="term" value="F:zinc ion binding"/>
    <property type="evidence" value="ECO:0007669"/>
    <property type="project" value="UniProtKB-UniRule"/>
</dbReference>
<dbReference type="GO" id="GO:0006284">
    <property type="term" value="P:base-excision repair"/>
    <property type="evidence" value="ECO:0007669"/>
    <property type="project" value="InterPro"/>
</dbReference>
<dbReference type="CDD" id="cd08966">
    <property type="entry name" value="EcFpg-like_N"/>
    <property type="match status" value="1"/>
</dbReference>
<dbReference type="FunFam" id="1.10.8.50:FF:000003">
    <property type="entry name" value="Formamidopyrimidine-DNA glycosylase"/>
    <property type="match status" value="1"/>
</dbReference>
<dbReference type="Gene3D" id="1.10.8.50">
    <property type="match status" value="1"/>
</dbReference>
<dbReference type="Gene3D" id="3.20.190.10">
    <property type="entry name" value="MutM-like, N-terminal"/>
    <property type="match status" value="1"/>
</dbReference>
<dbReference type="HAMAP" id="MF_00103">
    <property type="entry name" value="Fapy_DNA_glycosyl"/>
    <property type="match status" value="1"/>
</dbReference>
<dbReference type="InterPro" id="IPR015886">
    <property type="entry name" value="DNA_glyclase/AP_lyase_DNA-bd"/>
</dbReference>
<dbReference type="InterPro" id="IPR015887">
    <property type="entry name" value="DNA_glyclase_Znf_dom_DNA_BS"/>
</dbReference>
<dbReference type="InterPro" id="IPR020629">
    <property type="entry name" value="Formamido-pyr_DNA_Glyclase"/>
</dbReference>
<dbReference type="InterPro" id="IPR012319">
    <property type="entry name" value="FPG_cat"/>
</dbReference>
<dbReference type="InterPro" id="IPR035937">
    <property type="entry name" value="MutM-like_N-ter"/>
</dbReference>
<dbReference type="InterPro" id="IPR010979">
    <property type="entry name" value="Ribosomal_uS13-like_H2TH"/>
</dbReference>
<dbReference type="InterPro" id="IPR000214">
    <property type="entry name" value="Znf_DNA_glyclase/AP_lyase"/>
</dbReference>
<dbReference type="NCBIfam" id="TIGR00577">
    <property type="entry name" value="fpg"/>
    <property type="match status" value="1"/>
</dbReference>
<dbReference type="NCBIfam" id="NF002211">
    <property type="entry name" value="PRK01103.1"/>
    <property type="match status" value="1"/>
</dbReference>
<dbReference type="PANTHER" id="PTHR22993">
    <property type="entry name" value="FORMAMIDOPYRIMIDINE-DNA GLYCOSYLASE"/>
    <property type="match status" value="1"/>
</dbReference>
<dbReference type="PANTHER" id="PTHR22993:SF9">
    <property type="entry name" value="FORMAMIDOPYRIMIDINE-DNA GLYCOSYLASE"/>
    <property type="match status" value="1"/>
</dbReference>
<dbReference type="Pfam" id="PF01149">
    <property type="entry name" value="Fapy_DNA_glyco"/>
    <property type="match status" value="1"/>
</dbReference>
<dbReference type="Pfam" id="PF06831">
    <property type="entry name" value="H2TH"/>
    <property type="match status" value="1"/>
</dbReference>
<dbReference type="SMART" id="SM00898">
    <property type="entry name" value="Fapy_DNA_glyco"/>
    <property type="match status" value="1"/>
</dbReference>
<dbReference type="SMART" id="SM01232">
    <property type="entry name" value="H2TH"/>
    <property type="match status" value="1"/>
</dbReference>
<dbReference type="SUPFAM" id="SSF57716">
    <property type="entry name" value="Glucocorticoid receptor-like (DNA-binding domain)"/>
    <property type="match status" value="1"/>
</dbReference>
<dbReference type="SUPFAM" id="SSF81624">
    <property type="entry name" value="N-terminal domain of MutM-like DNA repair proteins"/>
    <property type="match status" value="1"/>
</dbReference>
<dbReference type="SUPFAM" id="SSF46946">
    <property type="entry name" value="S13-like H2TH domain"/>
    <property type="match status" value="1"/>
</dbReference>
<dbReference type="PROSITE" id="PS51068">
    <property type="entry name" value="FPG_CAT"/>
    <property type="match status" value="1"/>
</dbReference>
<dbReference type="PROSITE" id="PS01242">
    <property type="entry name" value="ZF_FPG_1"/>
    <property type="match status" value="1"/>
</dbReference>
<dbReference type="PROSITE" id="PS51066">
    <property type="entry name" value="ZF_FPG_2"/>
    <property type="match status" value="1"/>
</dbReference>
<feature type="initiator methionine" description="Removed" evidence="1">
    <location>
        <position position="1"/>
    </location>
</feature>
<feature type="chain" id="PRO_1000118895" description="Formamidopyrimidine-DNA glycosylase">
    <location>
        <begin position="2"/>
        <end position="292"/>
    </location>
</feature>
<feature type="zinc finger region" description="FPG-type" evidence="2">
    <location>
        <begin position="256"/>
        <end position="292"/>
    </location>
</feature>
<feature type="active site" description="Schiff-base intermediate with DNA" evidence="2">
    <location>
        <position position="2"/>
    </location>
</feature>
<feature type="active site" description="Proton donor" evidence="2">
    <location>
        <position position="3"/>
    </location>
</feature>
<feature type="active site" description="Proton donor; for beta-elimination activity" evidence="2">
    <location>
        <position position="58"/>
    </location>
</feature>
<feature type="active site" description="Proton donor; for delta-elimination activity" evidence="2">
    <location>
        <position position="282"/>
    </location>
</feature>
<feature type="binding site" evidence="2">
    <location>
        <position position="103"/>
    </location>
    <ligand>
        <name>DNA</name>
        <dbReference type="ChEBI" id="CHEBI:16991"/>
    </ligand>
</feature>
<feature type="binding site" evidence="2">
    <location>
        <position position="122"/>
    </location>
    <ligand>
        <name>DNA</name>
        <dbReference type="ChEBI" id="CHEBI:16991"/>
    </ligand>
</feature>
<feature type="binding site" evidence="2">
    <location>
        <position position="165"/>
    </location>
    <ligand>
        <name>DNA</name>
        <dbReference type="ChEBI" id="CHEBI:16991"/>
    </ligand>
</feature>
<evidence type="ECO:0000250" key="1"/>
<evidence type="ECO:0000255" key="2">
    <source>
        <dbReference type="HAMAP-Rule" id="MF_00103"/>
    </source>
</evidence>
<proteinExistence type="inferred from homology"/>
<comment type="function">
    <text evidence="2">Involved in base excision repair of DNA damaged by oxidation or by mutagenic agents. Acts as a DNA glycosylase that recognizes and removes damaged bases. Has a preference for oxidized purines, such as 7,8-dihydro-8-oxoguanine (8-oxoG). Has AP (apurinic/apyrimidinic) lyase activity and introduces nicks in the DNA strand. Cleaves the DNA backbone by beta-delta elimination to generate a single-strand break at the site of the removed base with both 3'- and 5'-phosphates.</text>
</comment>
<comment type="catalytic activity">
    <reaction evidence="2">
        <text>Hydrolysis of DNA containing ring-opened 7-methylguanine residues, releasing 2,6-diamino-4-hydroxy-5-(N-methyl)formamidopyrimidine.</text>
        <dbReference type="EC" id="3.2.2.23"/>
    </reaction>
</comment>
<comment type="catalytic activity">
    <reaction evidence="2">
        <text>2'-deoxyribonucleotide-(2'-deoxyribose 5'-phosphate)-2'-deoxyribonucleotide-DNA = a 3'-end 2'-deoxyribonucleotide-(2,3-dehydro-2,3-deoxyribose 5'-phosphate)-DNA + a 5'-end 5'-phospho-2'-deoxyribonucleoside-DNA + H(+)</text>
        <dbReference type="Rhea" id="RHEA:66592"/>
        <dbReference type="Rhea" id="RHEA-COMP:13180"/>
        <dbReference type="Rhea" id="RHEA-COMP:16897"/>
        <dbReference type="Rhea" id="RHEA-COMP:17067"/>
        <dbReference type="ChEBI" id="CHEBI:15378"/>
        <dbReference type="ChEBI" id="CHEBI:136412"/>
        <dbReference type="ChEBI" id="CHEBI:157695"/>
        <dbReference type="ChEBI" id="CHEBI:167181"/>
        <dbReference type="EC" id="4.2.99.18"/>
    </reaction>
</comment>
<comment type="cofactor">
    <cofactor evidence="2">
        <name>Zn(2+)</name>
        <dbReference type="ChEBI" id="CHEBI:29105"/>
    </cofactor>
    <text evidence="2">Binds 1 zinc ion per subunit.</text>
</comment>
<comment type="subunit">
    <text evidence="2">Monomer.</text>
</comment>
<comment type="similarity">
    <text evidence="2">Belongs to the FPG family.</text>
</comment>
<sequence length="292" mass="31790">MPELPEVETVRRGLEPVMVGARILSVDQRRPDLRFPFPDRFPERLAGRRILALGRRAKYLLADLDDGDVLIMHLGMSGSFRVEQAGPAKTLSPRGAPPKNAAHDHVVFTLTSGGRIVYNDPRRFGFMQIAARADLAAHPLFRSLGVEPLGNELSGAALARLFAGKTTSLKAALLDQSLVAGLGNIYVCEALHRAGLSPLRQAGSLTKKSGRPTERANRLADTIREVLEEAVAAGGSSLRDHRQTNGALGYFQHNFRVYDRALHPCPTPGCKGEISRITQGGRSSFFCSMCQK</sequence>
<gene>
    <name evidence="2" type="primary">mutM</name>
    <name evidence="2" type="synonym">fpg</name>
    <name type="ordered locus">Msil_3033</name>
</gene>
<reference key="1">
    <citation type="journal article" date="2010" name="J. Bacteriol.">
        <title>Complete genome sequence of the aerobic facultative methanotroph Methylocella silvestris BL2.</title>
        <authorList>
            <person name="Chen Y."/>
            <person name="Crombie A."/>
            <person name="Rahman M.T."/>
            <person name="Dedysh S.N."/>
            <person name="Liesack W."/>
            <person name="Stott M.B."/>
            <person name="Alam M."/>
            <person name="Theisen A.R."/>
            <person name="Murrell J.C."/>
            <person name="Dunfield P.F."/>
        </authorList>
    </citation>
    <scope>NUCLEOTIDE SEQUENCE [LARGE SCALE GENOMIC DNA]</scope>
    <source>
        <strain>DSM 15510 / CIP 108128 / LMG 27833 / NCIMB 13906 / BL2</strain>
    </source>
</reference>
<organism>
    <name type="scientific">Methylocella silvestris (strain DSM 15510 / CIP 108128 / LMG 27833 / NCIMB 13906 / BL2)</name>
    <dbReference type="NCBI Taxonomy" id="395965"/>
    <lineage>
        <taxon>Bacteria</taxon>
        <taxon>Pseudomonadati</taxon>
        <taxon>Pseudomonadota</taxon>
        <taxon>Alphaproteobacteria</taxon>
        <taxon>Hyphomicrobiales</taxon>
        <taxon>Beijerinckiaceae</taxon>
        <taxon>Methylocella</taxon>
    </lineage>
</organism>